<gene>
    <name type="primary">CYP6D3</name>
</gene>
<feature type="chain" id="PRO_0000051879" description="Cytochrome P450 6d3">
    <location>
        <begin position="1"/>
        <end position="520"/>
    </location>
</feature>
<feature type="binding site" description="axial binding residue" evidence="1">
    <location>
        <position position="461"/>
    </location>
    <ligand>
        <name>heme</name>
        <dbReference type="ChEBI" id="CHEBI:30413"/>
    </ligand>
    <ligandPart>
        <name>Fe</name>
        <dbReference type="ChEBI" id="CHEBI:18248"/>
    </ligandPart>
</feature>
<feature type="sequence variant" description="In allele CYP6D3v4." evidence="4">
    <original>F</original>
    <variation>Y</variation>
    <location>
        <position position="4"/>
    </location>
</feature>
<feature type="sequence variant" description="In allele CYP6D3v4." evidence="4">
    <original>L</original>
    <variation>V</variation>
    <location>
        <position position="10"/>
    </location>
</feature>
<feature type="sequence variant" description="In allele CYP6D3v1, allele CYP6D3v3 and allele CYP6D3v4." evidence="2 3 4">
    <original>I</original>
    <variation>F</variation>
    <location>
        <position position="13"/>
    </location>
</feature>
<feature type="sequence variant" description="In allele CYP6D3v4." evidence="4">
    <original>V</original>
    <variation>A</variation>
    <location>
        <position position="30"/>
    </location>
</feature>
<feature type="sequence variant" description="In allele CYP6D3v4." evidence="4">
    <original>K</original>
    <variation>Q</variation>
    <location>
        <position position="74"/>
    </location>
</feature>
<feature type="sequence variant" description="In allele CYP6D3v1." evidence="2 3">
    <original>E</original>
    <variation>D</variation>
    <location>
        <position position="190"/>
    </location>
</feature>
<feature type="sequence variant" description="In allele CYP6D3v1, allele CYP6D3v3 and allele CYP6D3v4." evidence="2 3 4">
    <original>Q</original>
    <variation>R</variation>
    <location>
        <position position="221"/>
    </location>
</feature>
<feature type="sequence variant" description="In allele CYP6D3v1." evidence="2 3">
    <original>E</original>
    <variation>D</variation>
    <location>
        <position position="339"/>
    </location>
</feature>
<feature type="sequence variant" description="In allele CYP6D3v1." evidence="2 3">
    <original>A</original>
    <variation>V</variation>
    <location>
        <position position="344"/>
    </location>
</feature>
<feature type="sequence variant" description="In allele CYP6D3v1." evidence="2 3">
    <original>I</original>
    <variation>L</variation>
    <location>
        <position position="363"/>
    </location>
</feature>
<feature type="sequence variant" description="In allele CYP6D3v1, allele CYP6D3v3 and allele CYP6D3v4.">
    <location>
        <begin position="519"/>
        <end position="520"/>
    </location>
</feature>
<keyword id="KW-0256">Endoplasmic reticulum</keyword>
<keyword id="KW-0349">Heme</keyword>
<keyword id="KW-0408">Iron</keyword>
<keyword id="KW-0472">Membrane</keyword>
<keyword id="KW-0479">Metal-binding</keyword>
<keyword id="KW-0492">Microsome</keyword>
<keyword id="KW-0503">Monooxygenase</keyword>
<keyword id="KW-0560">Oxidoreductase</keyword>
<keyword id="KW-1185">Reference proteome</keyword>
<protein>
    <recommendedName>
        <fullName>Cytochrome P450 6d3</fullName>
        <ecNumber>1.14.-.-</ecNumber>
    </recommendedName>
    <alternativeName>
        <fullName>CYPVID3</fullName>
    </alternativeName>
    <alternativeName>
        <fullName>Pyrethroid resistance cytochrome P450</fullName>
    </alternativeName>
</protein>
<reference key="1">
    <citation type="journal article" date="2001" name="Insect Biochem. Mol. Biol.">
        <title>Expression and regulation of CYP6D3 in the house fly, Musca domestica (L.).</title>
        <authorList>
            <person name="Kasai S."/>
            <person name="Scott J.G."/>
        </authorList>
    </citation>
    <scope>NUCLEOTIDE SEQUENCE</scope>
    <scope>VARIANTS PHE-13; ASP-190; ARG-221; ASP-339; VAL-344; LEU-363 AND 519-ARG--ARG-520 DEL</scope>
    <source>
        <strain>CS</strain>
        <strain>Edinburgh</strain>
        <strain>LPR</strain>
    </source>
</reference>
<reference key="2">
    <citation type="journal article" date="2001" name="Insect Mol. Biol.">
        <title>Cytochrome P450s CYP6D3 and CYP6D1 are part of a P450 gene cluster on autosome 1 in house fly.</title>
        <authorList>
            <person name="Kasai S."/>
            <person name="Scott J.G."/>
        </authorList>
    </citation>
    <scope>NUCLEOTIDE SEQUENCE</scope>
    <scope>VARIANTS PHE-13; ASP-190; ARG-221; ASP-339; VAL-344; LEU-363 AND 519-ARG--ARG-520 DEL</scope>
    <source>
        <strain>Edinburgh</strain>
    </source>
</reference>
<reference key="3">
    <citation type="submission" date="2000-10" db="EMBL/GenBank/DDBJ databases">
        <title>Molecular cloning, nucleotide sequences and gene expression of new cytochrome P450s from the pyrethroid resistant housefly, Musca domestica L. (Diptera: Muscidae).</title>
        <authorList>
            <person name="Kamiya E."/>
            <person name="Yamakawa M."/>
            <person name="Shono T."/>
            <person name="Kono Y."/>
        </authorList>
    </citation>
    <scope>NUCLEOTIDE SEQUENCE</scope>
    <scope>VARIANTS TYR-4; VAL-10; PHE-13; ALA-30; GLN-74; ARG-221 AND 519-ARG--ARG-520 DEL</scope>
    <source>
        <strain>YPER</strain>
    </source>
</reference>
<reference key="4">
    <citation type="submission" date="2000-06" db="EMBL/GenBank/DDBJ databases">
        <title>5' flanking sequence of CYP6D3.</title>
        <authorList>
            <person name="Kasai S."/>
            <person name="Scott J.G."/>
        </authorList>
    </citation>
    <scope>NUCLEOTIDE SEQUENCE OF 1-10</scope>
    <source>
        <strain>CS</strain>
        <strain>LPR</strain>
    </source>
</reference>
<name>CP6D3_MUSDO</name>
<comment type="function">
    <text evidence="1">Metabolizes pyrethroid insecticides and other xenobiotics.</text>
</comment>
<comment type="cofactor">
    <cofactor evidence="1">
        <name>heme</name>
        <dbReference type="ChEBI" id="CHEBI:30413"/>
    </cofactor>
</comment>
<comment type="subcellular location">
    <subcellularLocation>
        <location evidence="5">Endoplasmic reticulum membrane</location>
        <topology evidence="5">Peripheral membrane protein</topology>
    </subcellularLocation>
    <subcellularLocation>
        <location evidence="5">Microsome membrane</location>
        <topology evidence="5">Peripheral membrane protein</topology>
    </subcellularLocation>
</comment>
<comment type="developmental stage">
    <text>No expression in eggs nor day 1 pupae, yet it is readily detectable in larvae and adults.</text>
</comment>
<comment type="induction">
    <text>By phenobarbital in susceptible CS (16-fold) and in the LPR (1.6-fold) strains.</text>
</comment>
<comment type="polymorphism">
    <text>Alleles from the pyrethroid-susceptible strains CS (CYP6D1v2) (shown here) and Edinburgh (CYP6D1v1), and two alleles from the pyrethroid-resistant strains LPR (CYP6D1v3) and YPER (CYP6D1v4) are described here.</text>
</comment>
<comment type="miscellaneous">
    <text>Expressed at higher levels in LPR compared to susceptible flies.</text>
</comment>
<comment type="similarity">
    <text evidence="5">Belongs to the cytochrome P450 family.</text>
</comment>
<proteinExistence type="evidence at transcript level"/>
<accession>Q964Q7</accession>
<accession>Q95NT8</accession>
<accession>Q964Q3</accession>
<accession>Q9BLF7</accession>
<accession>Q9GU30</accession>
<dbReference type="EC" id="1.14.-.-"/>
<dbReference type="EMBL" id="AF283257">
    <property type="protein sequence ID" value="AAK69542.1"/>
    <property type="molecule type" value="mRNA"/>
</dbReference>
<dbReference type="EMBL" id="AF285767">
    <property type="protein sequence ID" value="AAK69552.1"/>
    <property type="molecule type" value="mRNA"/>
</dbReference>
<dbReference type="EMBL" id="AF200191">
    <property type="protein sequence ID" value="AAG28563.1"/>
    <property type="molecule type" value="Genomic_DNA"/>
</dbReference>
<dbReference type="EMBL" id="AB050702">
    <property type="protein sequence ID" value="BAB41135.1"/>
    <property type="molecule type" value="mRNA"/>
</dbReference>
<dbReference type="EMBL" id="AF283258">
    <property type="protein sequence ID" value="AAK69543.1"/>
    <property type="molecule type" value="Genomic_DNA"/>
</dbReference>
<dbReference type="EMBL" id="AF283259">
    <property type="protein sequence ID" value="AAK69544.1"/>
    <property type="molecule type" value="Genomic_DNA"/>
</dbReference>
<dbReference type="RefSeq" id="NP_001273810.1">
    <property type="nucleotide sequence ID" value="NM_001286881.1"/>
</dbReference>
<dbReference type="SMR" id="Q964Q7"/>
<dbReference type="GeneID" id="101899585"/>
<dbReference type="KEGG" id="mde:101899585"/>
<dbReference type="CTD" id="37594"/>
<dbReference type="VEuPathDB" id="VectorBase:MDOA002847"/>
<dbReference type="VEuPathDB" id="VectorBase:MDOMA2_016028"/>
<dbReference type="eggNOG" id="KOG0158">
    <property type="taxonomic scope" value="Eukaryota"/>
</dbReference>
<dbReference type="OrthoDB" id="2789670at2759"/>
<dbReference type="Proteomes" id="UP000694905">
    <property type="component" value="Unplaced"/>
</dbReference>
<dbReference type="GO" id="GO:0005789">
    <property type="term" value="C:endoplasmic reticulum membrane"/>
    <property type="evidence" value="ECO:0007669"/>
    <property type="project" value="UniProtKB-SubCell"/>
</dbReference>
<dbReference type="GO" id="GO:0020037">
    <property type="term" value="F:heme binding"/>
    <property type="evidence" value="ECO:0007669"/>
    <property type="project" value="InterPro"/>
</dbReference>
<dbReference type="GO" id="GO:0005506">
    <property type="term" value="F:iron ion binding"/>
    <property type="evidence" value="ECO:0007669"/>
    <property type="project" value="InterPro"/>
</dbReference>
<dbReference type="GO" id="GO:0004497">
    <property type="term" value="F:monooxygenase activity"/>
    <property type="evidence" value="ECO:0007669"/>
    <property type="project" value="UniProtKB-KW"/>
</dbReference>
<dbReference type="GO" id="GO:0016705">
    <property type="term" value="F:oxidoreductase activity, acting on paired donors, with incorporation or reduction of molecular oxygen"/>
    <property type="evidence" value="ECO:0007669"/>
    <property type="project" value="InterPro"/>
</dbReference>
<dbReference type="CDD" id="cd11056">
    <property type="entry name" value="CYP6-like"/>
    <property type="match status" value="1"/>
</dbReference>
<dbReference type="FunFam" id="1.10.630.10:FF:000042">
    <property type="entry name" value="Cytochrome P450"/>
    <property type="match status" value="1"/>
</dbReference>
<dbReference type="Gene3D" id="1.10.630.10">
    <property type="entry name" value="Cytochrome P450"/>
    <property type="match status" value="1"/>
</dbReference>
<dbReference type="InterPro" id="IPR001128">
    <property type="entry name" value="Cyt_P450"/>
</dbReference>
<dbReference type="InterPro" id="IPR017972">
    <property type="entry name" value="Cyt_P450_CS"/>
</dbReference>
<dbReference type="InterPro" id="IPR002401">
    <property type="entry name" value="Cyt_P450_E_grp-I"/>
</dbReference>
<dbReference type="InterPro" id="IPR036396">
    <property type="entry name" value="Cyt_P450_sf"/>
</dbReference>
<dbReference type="InterPro" id="IPR050476">
    <property type="entry name" value="Insect_CytP450_Detox"/>
</dbReference>
<dbReference type="PANTHER" id="PTHR24292">
    <property type="entry name" value="CYTOCHROME P450"/>
    <property type="match status" value="1"/>
</dbReference>
<dbReference type="PANTHER" id="PTHR24292:SF93">
    <property type="entry name" value="CYTOCHROME P450 310A1-RELATED"/>
    <property type="match status" value="1"/>
</dbReference>
<dbReference type="Pfam" id="PF00067">
    <property type="entry name" value="p450"/>
    <property type="match status" value="1"/>
</dbReference>
<dbReference type="PRINTS" id="PR00463">
    <property type="entry name" value="EP450I"/>
</dbReference>
<dbReference type="PRINTS" id="PR00385">
    <property type="entry name" value="P450"/>
</dbReference>
<dbReference type="SUPFAM" id="SSF48264">
    <property type="entry name" value="Cytochrome P450"/>
    <property type="match status" value="1"/>
</dbReference>
<dbReference type="PROSITE" id="PS00086">
    <property type="entry name" value="CYTOCHROME_P450"/>
    <property type="match status" value="1"/>
</dbReference>
<evidence type="ECO:0000250" key="1"/>
<evidence type="ECO:0000269" key="2">
    <source>
    </source>
</evidence>
<evidence type="ECO:0000269" key="3">
    <source>
    </source>
</evidence>
<evidence type="ECO:0000269" key="4">
    <source ref="3"/>
</evidence>
<evidence type="ECO:0000305" key="5"/>
<sequence>MLLFLLITLLSAIFIFAKRHYTQWQRLGLVSDEAVIPFGSLAKVFRKERPFGLVMYDLYEKFQEQVVGIYLFFKPALLIRDAELARQILTSDFNSFHDRGIYVDEKNDPMSANLFALEGQSWRTLRMKLTPSFSSGKLKGMFETVDDVGNKLLEYLNNQLKDGQTHVLDIKSILTTYAIDIIGSVIFGLEIDSFTNPDNEFRVLSDRSFDNESRSFLSKLQNLTNFVCPPIAKLLTRLGTKEPVVYRLRDIVKRTIEFREENNVVRKDLLHLLIQLRNTGKISDDNDNLWNKVESTATNLKAMSIDMIASNSFLFYIAGSETTASSTSFTIYELAMNPEALKKAQNEVDECLKKHGIKPDGRITYEAIQDMKYLDLCVKETTRKYPGLPFLNRQCTQDFKVPNSKFTIKKDTNVIISLLGLHRDAKYFPEPLAYKPERFADETKDYDAAAYMPFGEGPRHCIAQRMGVMNTKVALAKILANFNIEPMPHKEAEFQFNTAPVLVPVNGLRVGLSKRSFNRR</sequence>
<organism>
    <name type="scientific">Musca domestica</name>
    <name type="common">House fly</name>
    <dbReference type="NCBI Taxonomy" id="7370"/>
    <lineage>
        <taxon>Eukaryota</taxon>
        <taxon>Metazoa</taxon>
        <taxon>Ecdysozoa</taxon>
        <taxon>Arthropoda</taxon>
        <taxon>Hexapoda</taxon>
        <taxon>Insecta</taxon>
        <taxon>Pterygota</taxon>
        <taxon>Neoptera</taxon>
        <taxon>Endopterygota</taxon>
        <taxon>Diptera</taxon>
        <taxon>Brachycera</taxon>
        <taxon>Muscomorpha</taxon>
        <taxon>Muscoidea</taxon>
        <taxon>Muscidae</taxon>
        <taxon>Musca</taxon>
    </lineage>
</organism>